<name>HEM1_NEIMA</name>
<accession>P0A0T7</accession>
<accession>A1IQH9</accession>
<accession>Q9ZHD5</accession>
<keyword id="KW-0521">NADP</keyword>
<keyword id="KW-0560">Oxidoreductase</keyword>
<keyword id="KW-0627">Porphyrin biosynthesis</keyword>
<evidence type="ECO:0000255" key="1">
    <source>
        <dbReference type="HAMAP-Rule" id="MF_00087"/>
    </source>
</evidence>
<sequence length="415" mass="45472">MQLTAVGLNHQTAPLSIREKLAFAAACLPEAVRNLARSNAATEAVILSTCNRTELYCVGDSEEIIRWLADYHSLPIEEISPYLYTLGMQETVRHAFRVACGLDSMVLGEPQILGQIKDAVRVAQEQESMGKKLNALFQKTFSVAKEVRTDTAVGENSVSMASASVKLAEQIFPDIGDLNVLFIGAGEMIELVATYFAAKSPRLMTVANRTLARAQELCDKLGVNAEPCLLSDLPAILHEYDVVVSSTASQLPIVGKGMVERALKQRQSMPLFMLDLAVPRDIEAEVGDLNDAYLYTVDDMVNIVQSGKEARQKAAAAAETLVSEKVAEFVRQQQGRQSVPLIRALRDEGEKARKQVLENAMKQLAKGATAEEVLERLSIQLTNKLLHSPTQTLNKAGEEDKDLVHAVAQIYHLDK</sequence>
<protein>
    <recommendedName>
        <fullName evidence="1">Glutamyl-tRNA reductase</fullName>
        <shortName evidence="1">GluTR</shortName>
        <ecNumber evidence="1">1.2.1.70</ecNumber>
    </recommendedName>
</protein>
<gene>
    <name evidence="1" type="primary">hemA</name>
    <name type="ordered locus">NMA0760</name>
</gene>
<reference key="1">
    <citation type="journal article" date="2000" name="Nature">
        <title>Complete DNA sequence of a serogroup A strain of Neisseria meningitidis Z2491.</title>
        <authorList>
            <person name="Parkhill J."/>
            <person name="Achtman M."/>
            <person name="James K.D."/>
            <person name="Bentley S.D."/>
            <person name="Churcher C.M."/>
            <person name="Klee S.R."/>
            <person name="Morelli G."/>
            <person name="Basham D."/>
            <person name="Brown D."/>
            <person name="Chillingworth T."/>
            <person name="Davies R.M."/>
            <person name="Davis P."/>
            <person name="Devlin K."/>
            <person name="Feltwell T."/>
            <person name="Hamlin N."/>
            <person name="Holroyd S."/>
            <person name="Jagels K."/>
            <person name="Leather S."/>
            <person name="Moule S."/>
            <person name="Mungall K.L."/>
            <person name="Quail M.A."/>
            <person name="Rajandream M.A."/>
            <person name="Rutherford K.M."/>
            <person name="Simmonds M."/>
            <person name="Skelton J."/>
            <person name="Whitehead S."/>
            <person name="Spratt B.G."/>
            <person name="Barrell B.G."/>
        </authorList>
    </citation>
    <scope>NUCLEOTIDE SEQUENCE [LARGE SCALE GENOMIC DNA]</scope>
    <source>
        <strain>DSM 15465 / Z2491</strain>
    </source>
</reference>
<comment type="function">
    <text evidence="1">Catalyzes the NADPH-dependent reduction of glutamyl-tRNA(Glu) to glutamate 1-semialdehyde (GSA).</text>
</comment>
<comment type="catalytic activity">
    <reaction evidence="1">
        <text>(S)-4-amino-5-oxopentanoate + tRNA(Glu) + NADP(+) = L-glutamyl-tRNA(Glu) + NADPH + H(+)</text>
        <dbReference type="Rhea" id="RHEA:12344"/>
        <dbReference type="Rhea" id="RHEA-COMP:9663"/>
        <dbReference type="Rhea" id="RHEA-COMP:9680"/>
        <dbReference type="ChEBI" id="CHEBI:15378"/>
        <dbReference type="ChEBI" id="CHEBI:57501"/>
        <dbReference type="ChEBI" id="CHEBI:57783"/>
        <dbReference type="ChEBI" id="CHEBI:58349"/>
        <dbReference type="ChEBI" id="CHEBI:78442"/>
        <dbReference type="ChEBI" id="CHEBI:78520"/>
        <dbReference type="EC" id="1.2.1.70"/>
    </reaction>
</comment>
<comment type="pathway">
    <text evidence="1">Porphyrin-containing compound metabolism; protoporphyrin-IX biosynthesis; 5-aminolevulinate from L-glutamyl-tRNA(Glu): step 1/2.</text>
</comment>
<comment type="subunit">
    <text evidence="1">Homodimer.</text>
</comment>
<comment type="domain">
    <text evidence="1">Possesses an unusual extended V-shaped dimeric structure with each monomer consisting of three distinct domains arranged along a curved 'spinal' alpha-helix. The N-terminal catalytic domain specifically recognizes the glutamate moiety of the substrate. The second domain is the NADPH-binding domain, and the third C-terminal domain is responsible for dimerization.</text>
</comment>
<comment type="miscellaneous">
    <text evidence="1">During catalysis, the active site Cys acts as a nucleophile attacking the alpha-carbonyl group of tRNA-bound glutamate with the formation of a thioester intermediate between enzyme and glutamate, and the concomitant release of tRNA(Glu). The thioester intermediate is finally reduced by direct hydride transfer from NADPH, to form the product GSA.</text>
</comment>
<comment type="similarity">
    <text evidence="1">Belongs to the glutamyl-tRNA reductase family.</text>
</comment>
<proteinExistence type="inferred from homology"/>
<dbReference type="EC" id="1.2.1.70" evidence="1"/>
<dbReference type="EMBL" id="AL157959">
    <property type="protein sequence ID" value="CAM08010.1"/>
    <property type="molecule type" value="Genomic_DNA"/>
</dbReference>
<dbReference type="PIR" id="A81920">
    <property type="entry name" value="A81920"/>
</dbReference>
<dbReference type="RefSeq" id="WP_002221356.1">
    <property type="nucleotide sequence ID" value="NC_003116.1"/>
</dbReference>
<dbReference type="SMR" id="P0A0T7"/>
<dbReference type="EnsemblBacteria" id="CAM08010">
    <property type="protein sequence ID" value="CAM08010"/>
    <property type="gene ID" value="NMA0760"/>
</dbReference>
<dbReference type="GeneID" id="93386609"/>
<dbReference type="KEGG" id="nma:NMA0760"/>
<dbReference type="HOGENOM" id="CLU_035113_2_2_4"/>
<dbReference type="UniPathway" id="UPA00251">
    <property type="reaction ID" value="UER00316"/>
</dbReference>
<dbReference type="Proteomes" id="UP000000626">
    <property type="component" value="Chromosome"/>
</dbReference>
<dbReference type="GO" id="GO:0008883">
    <property type="term" value="F:glutamyl-tRNA reductase activity"/>
    <property type="evidence" value="ECO:0007669"/>
    <property type="project" value="UniProtKB-UniRule"/>
</dbReference>
<dbReference type="GO" id="GO:0050661">
    <property type="term" value="F:NADP binding"/>
    <property type="evidence" value="ECO:0007669"/>
    <property type="project" value="InterPro"/>
</dbReference>
<dbReference type="GO" id="GO:0019353">
    <property type="term" value="P:protoporphyrinogen IX biosynthetic process from glutamate"/>
    <property type="evidence" value="ECO:0007669"/>
    <property type="project" value="TreeGrafter"/>
</dbReference>
<dbReference type="CDD" id="cd05213">
    <property type="entry name" value="NAD_bind_Glutamyl_tRNA_reduct"/>
    <property type="match status" value="1"/>
</dbReference>
<dbReference type="FunFam" id="3.30.460.30:FF:000001">
    <property type="entry name" value="Glutamyl-tRNA reductase"/>
    <property type="match status" value="1"/>
</dbReference>
<dbReference type="FunFam" id="3.40.50.720:FF:000031">
    <property type="entry name" value="Glutamyl-tRNA reductase"/>
    <property type="match status" value="1"/>
</dbReference>
<dbReference type="Gene3D" id="3.30.460.30">
    <property type="entry name" value="Glutamyl-tRNA reductase, N-terminal domain"/>
    <property type="match status" value="1"/>
</dbReference>
<dbReference type="Gene3D" id="3.40.50.720">
    <property type="entry name" value="NAD(P)-binding Rossmann-like Domain"/>
    <property type="match status" value="1"/>
</dbReference>
<dbReference type="HAMAP" id="MF_00087">
    <property type="entry name" value="Glu_tRNA_reductase"/>
    <property type="match status" value="1"/>
</dbReference>
<dbReference type="InterPro" id="IPR000343">
    <property type="entry name" value="4pyrrol_synth_GluRdtase"/>
</dbReference>
<dbReference type="InterPro" id="IPR015896">
    <property type="entry name" value="4pyrrol_synth_GluRdtase_dimer"/>
</dbReference>
<dbReference type="InterPro" id="IPR015895">
    <property type="entry name" value="4pyrrol_synth_GluRdtase_N"/>
</dbReference>
<dbReference type="InterPro" id="IPR018214">
    <property type="entry name" value="GluRdtase_CS"/>
</dbReference>
<dbReference type="InterPro" id="IPR036453">
    <property type="entry name" value="GluRdtase_dimer_dom_sf"/>
</dbReference>
<dbReference type="InterPro" id="IPR036343">
    <property type="entry name" value="GluRdtase_N_sf"/>
</dbReference>
<dbReference type="InterPro" id="IPR036291">
    <property type="entry name" value="NAD(P)-bd_dom_sf"/>
</dbReference>
<dbReference type="InterPro" id="IPR006151">
    <property type="entry name" value="Shikm_DH/Glu-tRNA_Rdtase"/>
</dbReference>
<dbReference type="NCBIfam" id="TIGR01035">
    <property type="entry name" value="hemA"/>
    <property type="match status" value="1"/>
</dbReference>
<dbReference type="PANTHER" id="PTHR43013">
    <property type="entry name" value="GLUTAMYL-TRNA REDUCTASE"/>
    <property type="match status" value="1"/>
</dbReference>
<dbReference type="PANTHER" id="PTHR43013:SF1">
    <property type="entry name" value="GLUTAMYL-TRNA REDUCTASE"/>
    <property type="match status" value="1"/>
</dbReference>
<dbReference type="Pfam" id="PF00745">
    <property type="entry name" value="GlutR_dimer"/>
    <property type="match status" value="1"/>
</dbReference>
<dbReference type="Pfam" id="PF05201">
    <property type="entry name" value="GlutR_N"/>
    <property type="match status" value="1"/>
</dbReference>
<dbReference type="Pfam" id="PF01488">
    <property type="entry name" value="Shikimate_DH"/>
    <property type="match status" value="1"/>
</dbReference>
<dbReference type="PIRSF" id="PIRSF000445">
    <property type="entry name" value="4pyrrol_synth_GluRdtase"/>
    <property type="match status" value="1"/>
</dbReference>
<dbReference type="SUPFAM" id="SSF69742">
    <property type="entry name" value="Glutamyl tRNA-reductase catalytic, N-terminal domain"/>
    <property type="match status" value="1"/>
</dbReference>
<dbReference type="SUPFAM" id="SSF69075">
    <property type="entry name" value="Glutamyl tRNA-reductase dimerization domain"/>
    <property type="match status" value="1"/>
</dbReference>
<dbReference type="SUPFAM" id="SSF51735">
    <property type="entry name" value="NAD(P)-binding Rossmann-fold domains"/>
    <property type="match status" value="1"/>
</dbReference>
<dbReference type="PROSITE" id="PS00747">
    <property type="entry name" value="GLUTR"/>
    <property type="match status" value="1"/>
</dbReference>
<feature type="chain" id="PRO_0000114045" description="Glutamyl-tRNA reductase">
    <location>
        <begin position="1"/>
        <end position="415"/>
    </location>
</feature>
<feature type="active site" description="Nucleophile" evidence="1">
    <location>
        <position position="50"/>
    </location>
</feature>
<feature type="binding site" evidence="1">
    <location>
        <begin position="49"/>
        <end position="52"/>
    </location>
    <ligand>
        <name>substrate</name>
    </ligand>
</feature>
<feature type="binding site" evidence="1">
    <location>
        <position position="104"/>
    </location>
    <ligand>
        <name>substrate</name>
    </ligand>
</feature>
<feature type="binding site" evidence="1">
    <location>
        <begin position="109"/>
        <end position="111"/>
    </location>
    <ligand>
        <name>substrate</name>
    </ligand>
</feature>
<feature type="binding site" evidence="1">
    <location>
        <position position="115"/>
    </location>
    <ligand>
        <name>substrate</name>
    </ligand>
</feature>
<feature type="binding site" evidence="1">
    <location>
        <begin position="184"/>
        <end position="189"/>
    </location>
    <ligand>
        <name>NADP(+)</name>
        <dbReference type="ChEBI" id="CHEBI:58349"/>
    </ligand>
</feature>
<feature type="site" description="Important for activity" evidence="1">
    <location>
        <position position="94"/>
    </location>
</feature>
<organism>
    <name type="scientific">Neisseria meningitidis serogroup A / serotype 4A (strain DSM 15465 / Z2491)</name>
    <dbReference type="NCBI Taxonomy" id="122587"/>
    <lineage>
        <taxon>Bacteria</taxon>
        <taxon>Pseudomonadati</taxon>
        <taxon>Pseudomonadota</taxon>
        <taxon>Betaproteobacteria</taxon>
        <taxon>Neisseriales</taxon>
        <taxon>Neisseriaceae</taxon>
        <taxon>Neisseria</taxon>
    </lineage>
</organism>